<dbReference type="EC" id="2.7.7.6" evidence="1"/>
<dbReference type="EMBL" id="CP000301">
    <property type="protein sequence ID" value="ABD88997.1"/>
    <property type="molecule type" value="Genomic_DNA"/>
</dbReference>
<dbReference type="SMR" id="Q211D9"/>
<dbReference type="STRING" id="316056.RPC_3457"/>
<dbReference type="KEGG" id="rpc:RPC_3457"/>
<dbReference type="eggNOG" id="COG0086">
    <property type="taxonomic scope" value="Bacteria"/>
</dbReference>
<dbReference type="HOGENOM" id="CLU_000524_3_1_5"/>
<dbReference type="OrthoDB" id="9815296at2"/>
<dbReference type="GO" id="GO:0000428">
    <property type="term" value="C:DNA-directed RNA polymerase complex"/>
    <property type="evidence" value="ECO:0007669"/>
    <property type="project" value="UniProtKB-KW"/>
</dbReference>
<dbReference type="GO" id="GO:0003677">
    <property type="term" value="F:DNA binding"/>
    <property type="evidence" value="ECO:0007669"/>
    <property type="project" value="UniProtKB-UniRule"/>
</dbReference>
<dbReference type="GO" id="GO:0003899">
    <property type="term" value="F:DNA-directed RNA polymerase activity"/>
    <property type="evidence" value="ECO:0007669"/>
    <property type="project" value="UniProtKB-UniRule"/>
</dbReference>
<dbReference type="GO" id="GO:0000287">
    <property type="term" value="F:magnesium ion binding"/>
    <property type="evidence" value="ECO:0007669"/>
    <property type="project" value="UniProtKB-UniRule"/>
</dbReference>
<dbReference type="GO" id="GO:0008270">
    <property type="term" value="F:zinc ion binding"/>
    <property type="evidence" value="ECO:0007669"/>
    <property type="project" value="UniProtKB-UniRule"/>
</dbReference>
<dbReference type="GO" id="GO:0006351">
    <property type="term" value="P:DNA-templated transcription"/>
    <property type="evidence" value="ECO:0007669"/>
    <property type="project" value="UniProtKB-UniRule"/>
</dbReference>
<dbReference type="CDD" id="cd02655">
    <property type="entry name" value="RNAP_beta'_C"/>
    <property type="match status" value="1"/>
</dbReference>
<dbReference type="CDD" id="cd01609">
    <property type="entry name" value="RNAP_beta'_N"/>
    <property type="match status" value="1"/>
</dbReference>
<dbReference type="Gene3D" id="1.10.132.30">
    <property type="match status" value="1"/>
</dbReference>
<dbReference type="Gene3D" id="1.10.150.390">
    <property type="match status" value="1"/>
</dbReference>
<dbReference type="Gene3D" id="1.10.1790.20">
    <property type="match status" value="1"/>
</dbReference>
<dbReference type="Gene3D" id="1.10.40.90">
    <property type="match status" value="1"/>
</dbReference>
<dbReference type="Gene3D" id="2.40.40.20">
    <property type="match status" value="1"/>
</dbReference>
<dbReference type="Gene3D" id="2.40.50.100">
    <property type="match status" value="3"/>
</dbReference>
<dbReference type="Gene3D" id="4.10.860.120">
    <property type="entry name" value="RNA polymerase II, clamp domain"/>
    <property type="match status" value="1"/>
</dbReference>
<dbReference type="Gene3D" id="1.10.274.100">
    <property type="entry name" value="RNA polymerase Rpb1, domain 3"/>
    <property type="match status" value="2"/>
</dbReference>
<dbReference type="HAMAP" id="MF_01322">
    <property type="entry name" value="RNApol_bact_RpoC"/>
    <property type="match status" value="1"/>
</dbReference>
<dbReference type="InterPro" id="IPR045867">
    <property type="entry name" value="DNA-dir_RpoC_beta_prime"/>
</dbReference>
<dbReference type="InterPro" id="IPR012754">
    <property type="entry name" value="DNA-dir_RpoC_beta_prime_bact"/>
</dbReference>
<dbReference type="InterPro" id="IPR000722">
    <property type="entry name" value="RNA_pol_asu"/>
</dbReference>
<dbReference type="InterPro" id="IPR006592">
    <property type="entry name" value="RNA_pol_N"/>
</dbReference>
<dbReference type="InterPro" id="IPR007080">
    <property type="entry name" value="RNA_pol_Rpb1_1"/>
</dbReference>
<dbReference type="InterPro" id="IPR007066">
    <property type="entry name" value="RNA_pol_Rpb1_3"/>
</dbReference>
<dbReference type="InterPro" id="IPR042102">
    <property type="entry name" value="RNA_pol_Rpb1_3_sf"/>
</dbReference>
<dbReference type="InterPro" id="IPR007083">
    <property type="entry name" value="RNA_pol_Rpb1_4"/>
</dbReference>
<dbReference type="InterPro" id="IPR007081">
    <property type="entry name" value="RNA_pol_Rpb1_5"/>
</dbReference>
<dbReference type="InterPro" id="IPR044893">
    <property type="entry name" value="RNA_pol_Rpb1_clamp_domain"/>
</dbReference>
<dbReference type="InterPro" id="IPR038120">
    <property type="entry name" value="Rpb1_funnel_sf"/>
</dbReference>
<dbReference type="NCBIfam" id="TIGR02386">
    <property type="entry name" value="rpoC_TIGR"/>
    <property type="match status" value="1"/>
</dbReference>
<dbReference type="PANTHER" id="PTHR19376">
    <property type="entry name" value="DNA-DIRECTED RNA POLYMERASE"/>
    <property type="match status" value="1"/>
</dbReference>
<dbReference type="PANTHER" id="PTHR19376:SF54">
    <property type="entry name" value="DNA-DIRECTED RNA POLYMERASE SUBUNIT BETA"/>
    <property type="match status" value="1"/>
</dbReference>
<dbReference type="Pfam" id="PF04997">
    <property type="entry name" value="RNA_pol_Rpb1_1"/>
    <property type="match status" value="1"/>
</dbReference>
<dbReference type="Pfam" id="PF00623">
    <property type="entry name" value="RNA_pol_Rpb1_2"/>
    <property type="match status" value="2"/>
</dbReference>
<dbReference type="Pfam" id="PF04983">
    <property type="entry name" value="RNA_pol_Rpb1_3"/>
    <property type="match status" value="1"/>
</dbReference>
<dbReference type="Pfam" id="PF05000">
    <property type="entry name" value="RNA_pol_Rpb1_4"/>
    <property type="match status" value="1"/>
</dbReference>
<dbReference type="Pfam" id="PF04998">
    <property type="entry name" value="RNA_pol_Rpb1_5"/>
    <property type="match status" value="1"/>
</dbReference>
<dbReference type="SMART" id="SM00663">
    <property type="entry name" value="RPOLA_N"/>
    <property type="match status" value="1"/>
</dbReference>
<dbReference type="SUPFAM" id="SSF64484">
    <property type="entry name" value="beta and beta-prime subunits of DNA dependent RNA-polymerase"/>
    <property type="match status" value="1"/>
</dbReference>
<comment type="function">
    <text evidence="1">DNA-dependent RNA polymerase catalyzes the transcription of DNA into RNA using the four ribonucleoside triphosphates as substrates.</text>
</comment>
<comment type="catalytic activity">
    <reaction evidence="1">
        <text>RNA(n) + a ribonucleoside 5'-triphosphate = RNA(n+1) + diphosphate</text>
        <dbReference type="Rhea" id="RHEA:21248"/>
        <dbReference type="Rhea" id="RHEA-COMP:14527"/>
        <dbReference type="Rhea" id="RHEA-COMP:17342"/>
        <dbReference type="ChEBI" id="CHEBI:33019"/>
        <dbReference type="ChEBI" id="CHEBI:61557"/>
        <dbReference type="ChEBI" id="CHEBI:140395"/>
        <dbReference type="EC" id="2.7.7.6"/>
    </reaction>
</comment>
<comment type="cofactor">
    <cofactor evidence="1">
        <name>Mg(2+)</name>
        <dbReference type="ChEBI" id="CHEBI:18420"/>
    </cofactor>
    <text evidence="1">Binds 1 Mg(2+) ion per subunit.</text>
</comment>
<comment type="cofactor">
    <cofactor evidence="1">
        <name>Zn(2+)</name>
        <dbReference type="ChEBI" id="CHEBI:29105"/>
    </cofactor>
    <text evidence="1">Binds 2 Zn(2+) ions per subunit.</text>
</comment>
<comment type="subunit">
    <text evidence="1">The RNAP catalytic core consists of 2 alpha, 1 beta, 1 beta' and 1 omega subunit. When a sigma factor is associated with the core the holoenzyme is formed, which can initiate transcription.</text>
</comment>
<comment type="similarity">
    <text evidence="1">Belongs to the RNA polymerase beta' chain family.</text>
</comment>
<organism>
    <name type="scientific">Rhodopseudomonas palustris (strain BisB18)</name>
    <dbReference type="NCBI Taxonomy" id="316056"/>
    <lineage>
        <taxon>Bacteria</taxon>
        <taxon>Pseudomonadati</taxon>
        <taxon>Pseudomonadota</taxon>
        <taxon>Alphaproteobacteria</taxon>
        <taxon>Hyphomicrobiales</taxon>
        <taxon>Nitrobacteraceae</taxon>
        <taxon>Rhodopseudomonas</taxon>
    </lineage>
</organism>
<protein>
    <recommendedName>
        <fullName evidence="1">DNA-directed RNA polymerase subunit beta'</fullName>
        <shortName evidence="1">RNAP subunit beta'</shortName>
        <ecNumber evidence="1">2.7.7.6</ecNumber>
    </recommendedName>
    <alternativeName>
        <fullName evidence="1">RNA polymerase subunit beta'</fullName>
    </alternativeName>
    <alternativeName>
        <fullName evidence="1">Transcriptase subunit beta'</fullName>
    </alternativeName>
</protein>
<sequence length="1401" mass="156056">MNQEIMNLFNPTTPAQVFDQIRISIASPEKILSWSYGEIKKPETINYRTFKPERDGLFCARIFGPIKDYECLCGKYKRMKYKGIICEKCSVEVTLSRVRRERMGHIELAAPVAHIWFLKSLPSRIGLLLDMTLKDLERILYFEYYVVLEPGLTALKDRQLLSEEEYLRAQDEYGQDSFTAMIGAEAIRELLKGLELEKLEASLRVEMQETESDIKHKKLAKRLKIVEAFRFSGNKPEWMILTVVPVIPPDLRPLVPLDGGRFATSDLNDLYRRVINRNNRLKRLMELRAPDIIIRNEKRMLQEAVDALFDNGRRGRVITGANKRPLKSLADMLKGKQGRFRQNLLGKRVDYSGRSVITVGPELRLHQCGLPKKMALELFKPFIYSRLDAKGLSTTVKQAKKLVEKERPEVWDILDEVIREHPILLNRAPTLHRLGIQAFEPVLIEGKAIQLHPLVCAAFNADFDGDQMAVHVPLSLEAQLEARVLMMSTNNILHPANGLPIIVPSQDIVLGLYYLSILREGLPGEGKLFGEAAEIEHALHAKVIHLHTKIKYRWEGLDENGKQVSRWYETTAGRTMLGQVLPKSVKMPFDVINKLMTKKEISGVIDQVYRHCGQKETVMFCDRIMALGFYNAFKAGISFGKDDMVVPASKWKTVEDTRTLAKEFEQQYNDGLITHGEKYNKVVDAWSKCTKKISEDMMTEISAVKKNPKGGEAQINSIFMMSNSGARGSQDQMRQLAGMRGLMAKPSGEIIETPIISNFKEGLSVLEYFNSTHGARKGLADTALKTANSGYLTRRLVDVAQDCIITADDCGTKLGIKMRAIIDAGTVVASLASRILGRTAGEDLRDPLTNKVVVKRGTLMEESHVDALQQAGIQEVKIRSALTCELVNGICGKCYGRDLARGTPVNHGEAVGVIAAQSIGEPGTQLTMRTFHIGGAAQINEQSFIESNFDGKVTIKNKAIAKNGEGHLVAMVRNMVVAVTDADGTERATHRIQYGARMRVDEGDMVKRGQRIAEWDPYTRPVLTEVEGIIGFEDLVEGQSISETLDESTGIAKRVVIDWRSQRGGADLRPAIVIKGKDGKILKLARGGEARYMLSVDAILSVDVGAKVKTGDILARISTESAKTRDITGGLPRVAELFEARKPKDAAIIAEISGTIRFGRDYKNKRRISIEPVDTTEETREYLIPKGKHIHLQDGDIVEKGDFIVEGNPAPHDILAIKGIEELAAYLVNEIQEVYRLQGVLINDKHIEVIVRQMLQKVEVTDQGETDMISGEQIDKIEFDQINAKAKEEGKKIATGTPVLLGITKASLQTRSFFSAASFQETTRVLTEAAVNGKVDPLEGLKENVIVGRLIPAGTGASMAKIREVAVKRDKLILDEREKQATIVPSAPEPEPLALPTPEQS</sequence>
<reference key="1">
    <citation type="submission" date="2006-03" db="EMBL/GenBank/DDBJ databases">
        <title>Complete sequence of Rhodopseudomonas palustris BisB18.</title>
        <authorList>
            <consortium name="US DOE Joint Genome Institute"/>
            <person name="Copeland A."/>
            <person name="Lucas S."/>
            <person name="Lapidus A."/>
            <person name="Barry K."/>
            <person name="Detter J.C."/>
            <person name="Glavina del Rio T."/>
            <person name="Hammon N."/>
            <person name="Israni S."/>
            <person name="Dalin E."/>
            <person name="Tice H."/>
            <person name="Pitluck S."/>
            <person name="Chain P."/>
            <person name="Malfatti S."/>
            <person name="Shin M."/>
            <person name="Vergez L."/>
            <person name="Schmutz J."/>
            <person name="Larimer F."/>
            <person name="Land M."/>
            <person name="Hauser L."/>
            <person name="Pelletier D.A."/>
            <person name="Kyrpides N."/>
            <person name="Anderson I."/>
            <person name="Oda Y."/>
            <person name="Harwood C.S."/>
            <person name="Richardson P."/>
        </authorList>
    </citation>
    <scope>NUCLEOTIDE SEQUENCE [LARGE SCALE GENOMIC DNA]</scope>
    <source>
        <strain>BisB18</strain>
    </source>
</reference>
<keyword id="KW-0240">DNA-directed RNA polymerase</keyword>
<keyword id="KW-0460">Magnesium</keyword>
<keyword id="KW-0479">Metal-binding</keyword>
<keyword id="KW-0548">Nucleotidyltransferase</keyword>
<keyword id="KW-0804">Transcription</keyword>
<keyword id="KW-0808">Transferase</keyword>
<keyword id="KW-0862">Zinc</keyword>
<feature type="chain" id="PRO_0000240818" description="DNA-directed RNA polymerase subunit beta'">
    <location>
        <begin position="1"/>
        <end position="1401"/>
    </location>
</feature>
<feature type="region of interest" description="Disordered" evidence="2">
    <location>
        <begin position="1378"/>
        <end position="1401"/>
    </location>
</feature>
<feature type="binding site" evidence="1">
    <location>
        <position position="71"/>
    </location>
    <ligand>
        <name>Zn(2+)</name>
        <dbReference type="ChEBI" id="CHEBI:29105"/>
        <label>1</label>
    </ligand>
</feature>
<feature type="binding site" evidence="1">
    <location>
        <position position="73"/>
    </location>
    <ligand>
        <name>Zn(2+)</name>
        <dbReference type="ChEBI" id="CHEBI:29105"/>
        <label>1</label>
    </ligand>
</feature>
<feature type="binding site" evidence="1">
    <location>
        <position position="86"/>
    </location>
    <ligand>
        <name>Zn(2+)</name>
        <dbReference type="ChEBI" id="CHEBI:29105"/>
        <label>1</label>
    </ligand>
</feature>
<feature type="binding site" evidence="1">
    <location>
        <position position="89"/>
    </location>
    <ligand>
        <name>Zn(2+)</name>
        <dbReference type="ChEBI" id="CHEBI:29105"/>
        <label>1</label>
    </ligand>
</feature>
<feature type="binding site" evidence="1">
    <location>
        <position position="462"/>
    </location>
    <ligand>
        <name>Mg(2+)</name>
        <dbReference type="ChEBI" id="CHEBI:18420"/>
    </ligand>
</feature>
<feature type="binding site" evidence="1">
    <location>
        <position position="464"/>
    </location>
    <ligand>
        <name>Mg(2+)</name>
        <dbReference type="ChEBI" id="CHEBI:18420"/>
    </ligand>
</feature>
<feature type="binding site" evidence="1">
    <location>
        <position position="466"/>
    </location>
    <ligand>
        <name>Mg(2+)</name>
        <dbReference type="ChEBI" id="CHEBI:18420"/>
    </ligand>
</feature>
<feature type="binding site" evidence="1">
    <location>
        <position position="810"/>
    </location>
    <ligand>
        <name>Zn(2+)</name>
        <dbReference type="ChEBI" id="CHEBI:29105"/>
        <label>2</label>
    </ligand>
</feature>
<feature type="binding site" evidence="1">
    <location>
        <position position="884"/>
    </location>
    <ligand>
        <name>Zn(2+)</name>
        <dbReference type="ChEBI" id="CHEBI:29105"/>
        <label>2</label>
    </ligand>
</feature>
<feature type="binding site" evidence="1">
    <location>
        <position position="891"/>
    </location>
    <ligand>
        <name>Zn(2+)</name>
        <dbReference type="ChEBI" id="CHEBI:29105"/>
        <label>2</label>
    </ligand>
</feature>
<feature type="binding site" evidence="1">
    <location>
        <position position="894"/>
    </location>
    <ligand>
        <name>Zn(2+)</name>
        <dbReference type="ChEBI" id="CHEBI:29105"/>
        <label>2</label>
    </ligand>
</feature>
<gene>
    <name evidence="1" type="primary">rpoC</name>
    <name type="ordered locus">RPC_3457</name>
</gene>
<name>RPOC_RHOPB</name>
<evidence type="ECO:0000255" key="1">
    <source>
        <dbReference type="HAMAP-Rule" id="MF_01322"/>
    </source>
</evidence>
<evidence type="ECO:0000256" key="2">
    <source>
        <dbReference type="SAM" id="MobiDB-lite"/>
    </source>
</evidence>
<proteinExistence type="inferred from homology"/>
<accession>Q211D9</accession>